<feature type="chain" id="PRO_0000406747" description="Pentafunctional AROM polypeptide">
    <location>
        <begin position="1"/>
        <end position="1556"/>
    </location>
</feature>
<feature type="region of interest" description="3-dehydroquinate synthase">
    <location>
        <begin position="1"/>
        <end position="387"/>
    </location>
</feature>
<feature type="region of interest" description="EPSP synthase">
    <location>
        <begin position="400"/>
        <end position="837"/>
    </location>
</feature>
<feature type="region of interest" description="Shikimate kinase">
    <location>
        <begin position="858"/>
        <end position="1049"/>
    </location>
</feature>
<feature type="region of interest" description="3-dehydroquinase">
    <location>
        <begin position="1050"/>
        <end position="1266"/>
    </location>
</feature>
<feature type="region of interest" description="Shikimate dehydrogenase">
    <location>
        <begin position="1279"/>
        <end position="1556"/>
    </location>
</feature>
<feature type="active site" description="Proton acceptor; for 3-dehydroquinate synthase activity" evidence="1">
    <location>
        <position position="263"/>
    </location>
</feature>
<feature type="active site" description="Proton acceptor; for 3-dehydroquinate synthase activity" evidence="1">
    <location>
        <position position="278"/>
    </location>
</feature>
<feature type="active site" description="For EPSP synthase activity" evidence="1">
    <location>
        <position position="819"/>
    </location>
</feature>
<feature type="active site" description="Proton acceptor; for 3-dehydroquinate dehydratase activity" evidence="1">
    <location>
        <position position="1171"/>
    </location>
</feature>
<feature type="active site" description="Schiff-base intermediate with substrate; for 3-dehydroquinate dehydratase activity" evidence="1">
    <location>
        <position position="1200"/>
    </location>
</feature>
<feature type="binding site" evidence="1">
    <location>
        <begin position="46"/>
        <end position="48"/>
    </location>
    <ligand>
        <name>NAD(+)</name>
        <dbReference type="ChEBI" id="CHEBI:57540"/>
    </ligand>
</feature>
<feature type="binding site" evidence="1">
    <location>
        <begin position="84"/>
        <end position="87"/>
    </location>
    <ligand>
        <name>NAD(+)</name>
        <dbReference type="ChEBI" id="CHEBI:57540"/>
    </ligand>
</feature>
<feature type="binding site" evidence="1">
    <location>
        <begin position="115"/>
        <end position="117"/>
    </location>
    <ligand>
        <name>NAD(+)</name>
        <dbReference type="ChEBI" id="CHEBI:57540"/>
    </ligand>
</feature>
<feature type="binding site" evidence="1">
    <location>
        <position position="120"/>
    </location>
    <ligand>
        <name>NAD(+)</name>
        <dbReference type="ChEBI" id="CHEBI:57540"/>
    </ligand>
</feature>
<feature type="binding site" evidence="1">
    <location>
        <position position="131"/>
    </location>
    <ligand>
        <name>7-phospho-2-dehydro-3-deoxy-D-arabino-heptonate</name>
        <dbReference type="ChEBI" id="CHEBI:58394"/>
    </ligand>
</feature>
<feature type="binding site" evidence="1">
    <location>
        <begin position="140"/>
        <end position="141"/>
    </location>
    <ligand>
        <name>NAD(+)</name>
        <dbReference type="ChEBI" id="CHEBI:57540"/>
    </ligand>
</feature>
<feature type="binding site" evidence="1">
    <location>
        <position position="147"/>
    </location>
    <ligand>
        <name>7-phospho-2-dehydro-3-deoxy-D-arabino-heptonate</name>
        <dbReference type="ChEBI" id="CHEBI:58394"/>
    </ligand>
</feature>
<feature type="binding site" evidence="1">
    <location>
        <position position="153"/>
    </location>
    <ligand>
        <name>7-phospho-2-dehydro-3-deoxy-D-arabino-heptonate</name>
        <dbReference type="ChEBI" id="CHEBI:58394"/>
    </ligand>
</feature>
<feature type="binding site" evidence="1">
    <location>
        <position position="162"/>
    </location>
    <ligand>
        <name>NAD(+)</name>
        <dbReference type="ChEBI" id="CHEBI:57540"/>
    </ligand>
</feature>
<feature type="binding site" evidence="1">
    <location>
        <position position="163"/>
    </location>
    <ligand>
        <name>7-phospho-2-dehydro-3-deoxy-D-arabino-heptonate</name>
        <dbReference type="ChEBI" id="CHEBI:58394"/>
    </ligand>
</feature>
<feature type="binding site" evidence="1">
    <location>
        <begin position="180"/>
        <end position="183"/>
    </location>
    <ligand>
        <name>NAD(+)</name>
        <dbReference type="ChEBI" id="CHEBI:57540"/>
    </ligand>
</feature>
<feature type="binding site" evidence="1">
    <location>
        <position position="191"/>
    </location>
    <ligand>
        <name>NAD(+)</name>
        <dbReference type="ChEBI" id="CHEBI:57540"/>
    </ligand>
</feature>
<feature type="binding site" evidence="1">
    <location>
        <begin position="195"/>
        <end position="198"/>
    </location>
    <ligand>
        <name>7-phospho-2-dehydro-3-deoxy-D-arabino-heptonate</name>
        <dbReference type="ChEBI" id="CHEBI:58394"/>
    </ligand>
</feature>
<feature type="binding site" evidence="1">
    <location>
        <position position="195"/>
    </location>
    <ligand>
        <name>Zn(2+)</name>
        <dbReference type="ChEBI" id="CHEBI:29105"/>
        <note>catalytic</note>
    </ligand>
</feature>
<feature type="binding site" evidence="1">
    <location>
        <position position="253"/>
    </location>
    <ligand>
        <name>7-phospho-2-dehydro-3-deoxy-D-arabino-heptonate</name>
        <dbReference type="ChEBI" id="CHEBI:58394"/>
    </ligand>
</feature>
<feature type="binding site" evidence="1">
    <location>
        <begin position="267"/>
        <end position="271"/>
    </location>
    <ligand>
        <name>7-phospho-2-dehydro-3-deoxy-D-arabino-heptonate</name>
        <dbReference type="ChEBI" id="CHEBI:58394"/>
    </ligand>
</feature>
<feature type="binding site" evidence="1">
    <location>
        <position position="274"/>
    </location>
    <ligand>
        <name>7-phospho-2-dehydro-3-deoxy-D-arabino-heptonate</name>
        <dbReference type="ChEBI" id="CHEBI:58394"/>
    </ligand>
</feature>
<feature type="binding site" evidence="1">
    <location>
        <position position="274"/>
    </location>
    <ligand>
        <name>Zn(2+)</name>
        <dbReference type="ChEBI" id="CHEBI:29105"/>
        <note>catalytic</note>
    </ligand>
</feature>
<feature type="binding site" evidence="1">
    <location>
        <position position="290"/>
    </location>
    <ligand>
        <name>7-phospho-2-dehydro-3-deoxy-D-arabino-heptonate</name>
        <dbReference type="ChEBI" id="CHEBI:58394"/>
    </ligand>
</feature>
<feature type="binding site" evidence="1">
    <location>
        <position position="290"/>
    </location>
    <ligand>
        <name>Zn(2+)</name>
        <dbReference type="ChEBI" id="CHEBI:29105"/>
        <note>catalytic</note>
    </ligand>
</feature>
<feature type="binding site" evidence="1">
    <location>
        <position position="359"/>
    </location>
    <ligand>
        <name>7-phospho-2-dehydro-3-deoxy-D-arabino-heptonate</name>
        <dbReference type="ChEBI" id="CHEBI:58394"/>
    </ligand>
</feature>
<feature type="binding site" evidence="1">
    <location>
        <begin position="864"/>
        <end position="871"/>
    </location>
    <ligand>
        <name>ATP</name>
        <dbReference type="ChEBI" id="CHEBI:30616"/>
    </ligand>
</feature>
<comment type="function">
    <text evidence="1">The AROM polypeptide catalyzes 5 consecutive enzymatic reactions in prechorismate polyaromatic amino acid biosynthesis.</text>
</comment>
<comment type="catalytic activity">
    <reaction evidence="1">
        <text>7-phospho-2-dehydro-3-deoxy-D-arabino-heptonate = 3-dehydroquinate + phosphate</text>
        <dbReference type="Rhea" id="RHEA:21968"/>
        <dbReference type="ChEBI" id="CHEBI:32364"/>
        <dbReference type="ChEBI" id="CHEBI:43474"/>
        <dbReference type="ChEBI" id="CHEBI:58394"/>
        <dbReference type="EC" id="4.2.3.4"/>
    </reaction>
</comment>
<comment type="catalytic activity">
    <reaction evidence="1">
        <text>3-dehydroquinate = 3-dehydroshikimate + H2O</text>
        <dbReference type="Rhea" id="RHEA:21096"/>
        <dbReference type="ChEBI" id="CHEBI:15377"/>
        <dbReference type="ChEBI" id="CHEBI:16630"/>
        <dbReference type="ChEBI" id="CHEBI:32364"/>
        <dbReference type="EC" id="4.2.1.10"/>
    </reaction>
</comment>
<comment type="catalytic activity">
    <reaction evidence="1">
        <text>shikimate + NADP(+) = 3-dehydroshikimate + NADPH + H(+)</text>
        <dbReference type="Rhea" id="RHEA:17737"/>
        <dbReference type="ChEBI" id="CHEBI:15378"/>
        <dbReference type="ChEBI" id="CHEBI:16630"/>
        <dbReference type="ChEBI" id="CHEBI:36208"/>
        <dbReference type="ChEBI" id="CHEBI:57783"/>
        <dbReference type="ChEBI" id="CHEBI:58349"/>
        <dbReference type="EC" id="1.1.1.25"/>
    </reaction>
</comment>
<comment type="catalytic activity">
    <reaction evidence="1">
        <text>shikimate + ATP = 3-phosphoshikimate + ADP + H(+)</text>
        <dbReference type="Rhea" id="RHEA:13121"/>
        <dbReference type="ChEBI" id="CHEBI:15378"/>
        <dbReference type="ChEBI" id="CHEBI:30616"/>
        <dbReference type="ChEBI" id="CHEBI:36208"/>
        <dbReference type="ChEBI" id="CHEBI:145989"/>
        <dbReference type="ChEBI" id="CHEBI:456216"/>
        <dbReference type="EC" id="2.7.1.71"/>
    </reaction>
</comment>
<comment type="catalytic activity">
    <reaction evidence="1">
        <text>3-phosphoshikimate + phosphoenolpyruvate = 5-O-(1-carboxyvinyl)-3-phosphoshikimate + phosphate</text>
        <dbReference type="Rhea" id="RHEA:21256"/>
        <dbReference type="ChEBI" id="CHEBI:43474"/>
        <dbReference type="ChEBI" id="CHEBI:57701"/>
        <dbReference type="ChEBI" id="CHEBI:58702"/>
        <dbReference type="ChEBI" id="CHEBI:145989"/>
        <dbReference type="EC" id="2.5.1.19"/>
    </reaction>
</comment>
<comment type="cofactor">
    <cofactor>
        <name>Zn(2+)</name>
        <dbReference type="ChEBI" id="CHEBI:29105"/>
    </cofactor>
    <text>Binds 2 Zn(2+) ions per subunit.</text>
</comment>
<comment type="pathway">
    <text evidence="1">Metabolic intermediate biosynthesis; chorismate biosynthesis; chorismate from D-erythrose 4-phosphate and phosphoenolpyruvate: step 2/7.</text>
</comment>
<comment type="pathway">
    <text evidence="1">Metabolic intermediate biosynthesis; chorismate biosynthesis; chorismate from D-erythrose 4-phosphate and phosphoenolpyruvate: step 3/7.</text>
</comment>
<comment type="pathway">
    <text evidence="1">Metabolic intermediate biosynthesis; chorismate biosynthesis; chorismate from D-erythrose 4-phosphate and phosphoenolpyruvate: step 4/7.</text>
</comment>
<comment type="pathway">
    <text evidence="1">Metabolic intermediate biosynthesis; chorismate biosynthesis; chorismate from D-erythrose 4-phosphate and phosphoenolpyruvate: step 5/7.</text>
</comment>
<comment type="pathway">
    <text evidence="1">Metabolic intermediate biosynthesis; chorismate biosynthesis; chorismate from D-erythrose 4-phosphate and phosphoenolpyruvate: step 6/7.</text>
</comment>
<comment type="subunit">
    <text evidence="1">Homodimer.</text>
</comment>
<comment type="subcellular location">
    <subcellularLocation>
        <location evidence="1">Cytoplasm</location>
    </subcellularLocation>
</comment>
<comment type="similarity">
    <text evidence="1">In the N-terminal section; belongs to the sugar phosphate cyclases superfamily. Dehydroquinate synthase family.</text>
</comment>
<comment type="similarity">
    <text evidence="1">In the 2nd section; belongs to the EPSP synthase family.</text>
</comment>
<comment type="similarity">
    <text evidence="1">In the 3rd section; belongs to the shikimate kinase family.</text>
</comment>
<comment type="similarity">
    <text evidence="1">In the 4th section; belongs to the type-I 3-dehydroquinase family.</text>
</comment>
<comment type="similarity">
    <text evidence="1">In the C-terminal section; belongs to the shikimate dehydrogenase family.</text>
</comment>
<reference key="1">
    <citation type="journal article" date="2004" name="Nature">
        <title>Genome evolution in yeasts.</title>
        <authorList>
            <person name="Dujon B."/>
            <person name="Sherman D."/>
            <person name="Fischer G."/>
            <person name="Durrens P."/>
            <person name="Casaregola S."/>
            <person name="Lafontaine I."/>
            <person name="de Montigny J."/>
            <person name="Marck C."/>
            <person name="Neuveglise C."/>
            <person name="Talla E."/>
            <person name="Goffard N."/>
            <person name="Frangeul L."/>
            <person name="Aigle M."/>
            <person name="Anthouard V."/>
            <person name="Babour A."/>
            <person name="Barbe V."/>
            <person name="Barnay S."/>
            <person name="Blanchin S."/>
            <person name="Beckerich J.-M."/>
            <person name="Beyne E."/>
            <person name="Bleykasten C."/>
            <person name="Boisrame A."/>
            <person name="Boyer J."/>
            <person name="Cattolico L."/>
            <person name="Confanioleri F."/>
            <person name="de Daruvar A."/>
            <person name="Despons L."/>
            <person name="Fabre E."/>
            <person name="Fairhead C."/>
            <person name="Ferry-Dumazet H."/>
            <person name="Groppi A."/>
            <person name="Hantraye F."/>
            <person name="Hennequin C."/>
            <person name="Jauniaux N."/>
            <person name="Joyet P."/>
            <person name="Kachouri R."/>
            <person name="Kerrest A."/>
            <person name="Koszul R."/>
            <person name="Lemaire M."/>
            <person name="Lesur I."/>
            <person name="Ma L."/>
            <person name="Muller H."/>
            <person name="Nicaud J.-M."/>
            <person name="Nikolski M."/>
            <person name="Oztas S."/>
            <person name="Ozier-Kalogeropoulos O."/>
            <person name="Pellenz S."/>
            <person name="Potier S."/>
            <person name="Richard G.-F."/>
            <person name="Straub M.-L."/>
            <person name="Suleau A."/>
            <person name="Swennen D."/>
            <person name="Tekaia F."/>
            <person name="Wesolowski-Louvel M."/>
            <person name="Westhof E."/>
            <person name="Wirth B."/>
            <person name="Zeniou-Meyer M."/>
            <person name="Zivanovic Y."/>
            <person name="Bolotin-Fukuhara M."/>
            <person name="Thierry A."/>
            <person name="Bouchier C."/>
            <person name="Caudron B."/>
            <person name="Scarpelli C."/>
            <person name="Gaillardin C."/>
            <person name="Weissenbach J."/>
            <person name="Wincker P."/>
            <person name="Souciet J.-L."/>
        </authorList>
    </citation>
    <scope>NUCLEOTIDE SEQUENCE [LARGE SCALE GENOMIC DNA]</scope>
    <source>
        <strain>CLIB 122 / E 150</strain>
    </source>
</reference>
<proteinExistence type="inferred from homology"/>
<dbReference type="EC" id="4.2.3.4" evidence="1"/>
<dbReference type="EC" id="2.5.1.19" evidence="1"/>
<dbReference type="EC" id="2.7.1.71" evidence="1"/>
<dbReference type="EC" id="4.2.1.10" evidence="1"/>
<dbReference type="EC" id="1.1.1.25" evidence="1"/>
<dbReference type="EMBL" id="CR382132">
    <property type="protein sequence ID" value="CAG78144.1"/>
    <property type="molecule type" value="Genomic_DNA"/>
</dbReference>
<dbReference type="RefSeq" id="XP_505337.1">
    <property type="nucleotide sequence ID" value="XM_505337.1"/>
</dbReference>
<dbReference type="SMR" id="Q6C1X5"/>
<dbReference type="FunCoup" id="Q6C1X5">
    <property type="interactions" value="489"/>
</dbReference>
<dbReference type="STRING" id="284591.Q6C1X5"/>
<dbReference type="EnsemblFungi" id="CAG78144">
    <property type="protein sequence ID" value="CAG78144"/>
    <property type="gene ID" value="YALI0_F12639g"/>
</dbReference>
<dbReference type="KEGG" id="yli:2908044"/>
<dbReference type="VEuPathDB" id="FungiDB:YALI0_F12639g"/>
<dbReference type="HOGENOM" id="CLU_001201_1_2_1"/>
<dbReference type="InParanoid" id="Q6C1X5"/>
<dbReference type="OMA" id="SWANMSW"/>
<dbReference type="OrthoDB" id="107196at4891"/>
<dbReference type="UniPathway" id="UPA00053">
    <property type="reaction ID" value="UER00085"/>
</dbReference>
<dbReference type="UniPathway" id="UPA00053">
    <property type="reaction ID" value="UER00086"/>
</dbReference>
<dbReference type="UniPathway" id="UPA00053">
    <property type="reaction ID" value="UER00087"/>
</dbReference>
<dbReference type="UniPathway" id="UPA00053">
    <property type="reaction ID" value="UER00088"/>
</dbReference>
<dbReference type="UniPathway" id="UPA00053">
    <property type="reaction ID" value="UER00089"/>
</dbReference>
<dbReference type="Proteomes" id="UP000001300">
    <property type="component" value="Chromosome F"/>
</dbReference>
<dbReference type="GO" id="GO:0005737">
    <property type="term" value="C:cytoplasm"/>
    <property type="evidence" value="ECO:0007669"/>
    <property type="project" value="UniProtKB-SubCell"/>
</dbReference>
<dbReference type="GO" id="GO:0003855">
    <property type="term" value="F:3-dehydroquinate dehydratase activity"/>
    <property type="evidence" value="ECO:0000318"/>
    <property type="project" value="GO_Central"/>
</dbReference>
<dbReference type="GO" id="GO:0003856">
    <property type="term" value="F:3-dehydroquinate synthase activity"/>
    <property type="evidence" value="ECO:0007669"/>
    <property type="project" value="UniProtKB-UniRule"/>
</dbReference>
<dbReference type="GO" id="GO:0003866">
    <property type="term" value="F:3-phosphoshikimate 1-carboxyvinyltransferase activity"/>
    <property type="evidence" value="ECO:0000318"/>
    <property type="project" value="GO_Central"/>
</dbReference>
<dbReference type="GO" id="GO:0005524">
    <property type="term" value="F:ATP binding"/>
    <property type="evidence" value="ECO:0007669"/>
    <property type="project" value="UniProtKB-UniRule"/>
</dbReference>
<dbReference type="GO" id="GO:0046872">
    <property type="term" value="F:metal ion binding"/>
    <property type="evidence" value="ECO:0007669"/>
    <property type="project" value="UniProtKB-UniRule"/>
</dbReference>
<dbReference type="GO" id="GO:0004764">
    <property type="term" value="F:shikimate 3-dehydrogenase (NADP+) activity"/>
    <property type="evidence" value="ECO:0000318"/>
    <property type="project" value="GO_Central"/>
</dbReference>
<dbReference type="GO" id="GO:0004765">
    <property type="term" value="F:shikimate kinase activity"/>
    <property type="evidence" value="ECO:0000318"/>
    <property type="project" value="GO_Central"/>
</dbReference>
<dbReference type="GO" id="GO:0008652">
    <property type="term" value="P:amino acid biosynthetic process"/>
    <property type="evidence" value="ECO:0007669"/>
    <property type="project" value="UniProtKB-KW"/>
</dbReference>
<dbReference type="GO" id="GO:0009073">
    <property type="term" value="P:aromatic amino acid family biosynthetic process"/>
    <property type="evidence" value="ECO:0007669"/>
    <property type="project" value="UniProtKB-UniRule"/>
</dbReference>
<dbReference type="GO" id="GO:0009423">
    <property type="term" value="P:chorismate biosynthetic process"/>
    <property type="evidence" value="ECO:0000318"/>
    <property type="project" value="GO_Central"/>
</dbReference>
<dbReference type="CDD" id="cd00502">
    <property type="entry name" value="DHQase_I"/>
    <property type="match status" value="1"/>
</dbReference>
<dbReference type="CDD" id="cd08195">
    <property type="entry name" value="DHQS"/>
    <property type="match status" value="1"/>
</dbReference>
<dbReference type="CDD" id="cd01556">
    <property type="entry name" value="EPSP_synthase"/>
    <property type="match status" value="1"/>
</dbReference>
<dbReference type="CDD" id="cd01065">
    <property type="entry name" value="NAD_bind_Shikimate_DH"/>
    <property type="match status" value="1"/>
</dbReference>
<dbReference type="CDD" id="cd00464">
    <property type="entry name" value="SK"/>
    <property type="match status" value="1"/>
</dbReference>
<dbReference type="FunFam" id="1.20.1090.10:FF:000007">
    <property type="entry name" value="Pentafunctional AROM polypeptide"/>
    <property type="match status" value="1"/>
</dbReference>
<dbReference type="FunFam" id="3.20.20.70:FF:000135">
    <property type="entry name" value="Pentafunctional AROM polypeptide"/>
    <property type="match status" value="1"/>
</dbReference>
<dbReference type="FunFam" id="3.40.50.10860:FF:000026">
    <property type="entry name" value="Pentafunctional AROM polypeptide"/>
    <property type="match status" value="1"/>
</dbReference>
<dbReference type="FunFam" id="3.40.50.1970:FF:000007">
    <property type="entry name" value="Pentafunctional AROM polypeptide"/>
    <property type="match status" value="1"/>
</dbReference>
<dbReference type="FunFam" id="3.40.50.300:FF:001256">
    <property type="entry name" value="Pentafunctional AROM polypeptide"/>
    <property type="match status" value="1"/>
</dbReference>
<dbReference type="FunFam" id="3.40.50.720:FF:001275">
    <property type="entry name" value="Pentafunctional AROM polypeptide"/>
    <property type="match status" value="1"/>
</dbReference>
<dbReference type="FunFam" id="3.65.10.10:FF:000007">
    <property type="entry name" value="Pentafunctional AROM polypeptide"/>
    <property type="match status" value="1"/>
</dbReference>
<dbReference type="Gene3D" id="3.40.50.1970">
    <property type="match status" value="1"/>
</dbReference>
<dbReference type="Gene3D" id="3.20.20.70">
    <property type="entry name" value="Aldolase class I"/>
    <property type="match status" value="1"/>
</dbReference>
<dbReference type="Gene3D" id="1.20.1090.10">
    <property type="entry name" value="Dehydroquinate synthase-like - alpha domain"/>
    <property type="match status" value="1"/>
</dbReference>
<dbReference type="Gene3D" id="3.65.10.10">
    <property type="entry name" value="Enolpyruvate transferase domain"/>
    <property type="match status" value="2"/>
</dbReference>
<dbReference type="Gene3D" id="3.40.50.10860">
    <property type="entry name" value="Leucine Dehydrogenase, chain A, domain 1"/>
    <property type="match status" value="1"/>
</dbReference>
<dbReference type="Gene3D" id="3.40.50.720">
    <property type="entry name" value="NAD(P)-binding Rossmann-like Domain"/>
    <property type="match status" value="1"/>
</dbReference>
<dbReference type="Gene3D" id="3.40.50.300">
    <property type="entry name" value="P-loop containing nucleotide triphosphate hydrolases"/>
    <property type="match status" value="1"/>
</dbReference>
<dbReference type="HAMAP" id="MF_00210">
    <property type="entry name" value="EPSP_synth"/>
    <property type="match status" value="1"/>
</dbReference>
<dbReference type="HAMAP" id="MF_03143">
    <property type="entry name" value="Pentafunct_AroM"/>
    <property type="match status" value="1"/>
</dbReference>
<dbReference type="HAMAP" id="MF_00222">
    <property type="entry name" value="Shikimate_DH_AroE"/>
    <property type="match status" value="1"/>
</dbReference>
<dbReference type="HAMAP" id="MF_00109">
    <property type="entry name" value="Shikimate_kinase"/>
    <property type="match status" value="1"/>
</dbReference>
<dbReference type="InterPro" id="IPR018508">
    <property type="entry name" value="3-dehydroquinate_DH_AS"/>
</dbReference>
<dbReference type="InterPro" id="IPR013785">
    <property type="entry name" value="Aldolase_TIM"/>
</dbReference>
<dbReference type="InterPro" id="IPR046346">
    <property type="entry name" value="Aminoacid_DH-like_N_sf"/>
</dbReference>
<dbReference type="InterPro" id="IPR016037">
    <property type="entry name" value="DHQ_synth_AroB"/>
</dbReference>
<dbReference type="InterPro" id="IPR030960">
    <property type="entry name" value="DHQS/DOIS_N"/>
</dbReference>
<dbReference type="InterPro" id="IPR056179">
    <property type="entry name" value="DHQS_C"/>
</dbReference>
<dbReference type="InterPro" id="IPR001381">
    <property type="entry name" value="DHquinase_I"/>
</dbReference>
<dbReference type="InterPro" id="IPR001986">
    <property type="entry name" value="Enolpyruvate_Tfrase_dom"/>
</dbReference>
<dbReference type="InterPro" id="IPR036968">
    <property type="entry name" value="Enolpyruvate_Tfrase_sf"/>
</dbReference>
<dbReference type="InterPro" id="IPR006264">
    <property type="entry name" value="EPSP_synthase"/>
</dbReference>
<dbReference type="InterPro" id="IPR023193">
    <property type="entry name" value="EPSP_synthase_CS"/>
</dbReference>
<dbReference type="InterPro" id="IPR036291">
    <property type="entry name" value="NAD(P)-bd_dom_sf"/>
</dbReference>
<dbReference type="InterPro" id="IPR027417">
    <property type="entry name" value="P-loop_NTPase"/>
</dbReference>
<dbReference type="InterPro" id="IPR008289">
    <property type="entry name" value="Pentafunct_AroM"/>
</dbReference>
<dbReference type="InterPro" id="IPR013792">
    <property type="entry name" value="RNA3'P_cycl/enolpyr_Trfase_a/b"/>
</dbReference>
<dbReference type="InterPro" id="IPR041121">
    <property type="entry name" value="SDH_C"/>
</dbReference>
<dbReference type="InterPro" id="IPR031322">
    <property type="entry name" value="Shikimate/glucono_kinase"/>
</dbReference>
<dbReference type="InterPro" id="IPR013708">
    <property type="entry name" value="Shikimate_DH-bd_N"/>
</dbReference>
<dbReference type="InterPro" id="IPR010110">
    <property type="entry name" value="Shikimate_DH_AroM-type"/>
</dbReference>
<dbReference type="InterPro" id="IPR022893">
    <property type="entry name" value="Shikimate_DH_fam"/>
</dbReference>
<dbReference type="InterPro" id="IPR000623">
    <property type="entry name" value="Shikimate_kinase/TSH1"/>
</dbReference>
<dbReference type="InterPro" id="IPR023000">
    <property type="entry name" value="Shikimate_kinase_CS"/>
</dbReference>
<dbReference type="InterPro" id="IPR006151">
    <property type="entry name" value="Shikm_DH/Glu-tRNA_Rdtase"/>
</dbReference>
<dbReference type="NCBIfam" id="TIGR01356">
    <property type="entry name" value="aroA"/>
    <property type="match status" value="1"/>
</dbReference>
<dbReference type="NCBIfam" id="TIGR01357">
    <property type="entry name" value="aroB"/>
    <property type="match status" value="1"/>
</dbReference>
<dbReference type="NCBIfam" id="TIGR01093">
    <property type="entry name" value="aroD"/>
    <property type="match status" value="1"/>
</dbReference>
<dbReference type="NCBIfam" id="TIGR01809">
    <property type="entry name" value="Shik-DH-AROM"/>
    <property type="match status" value="1"/>
</dbReference>
<dbReference type="PANTHER" id="PTHR21090">
    <property type="entry name" value="AROM/DEHYDROQUINATE SYNTHASE"/>
    <property type="match status" value="1"/>
</dbReference>
<dbReference type="PANTHER" id="PTHR21090:SF5">
    <property type="entry name" value="PENTAFUNCTIONAL AROM POLYPEPTIDE"/>
    <property type="match status" value="1"/>
</dbReference>
<dbReference type="Pfam" id="PF01761">
    <property type="entry name" value="DHQ_synthase"/>
    <property type="match status" value="1"/>
</dbReference>
<dbReference type="Pfam" id="PF24621">
    <property type="entry name" value="DHQS_C"/>
    <property type="match status" value="1"/>
</dbReference>
<dbReference type="Pfam" id="PF01487">
    <property type="entry name" value="DHquinase_I"/>
    <property type="match status" value="1"/>
</dbReference>
<dbReference type="Pfam" id="PF00275">
    <property type="entry name" value="EPSP_synthase"/>
    <property type="match status" value="1"/>
</dbReference>
<dbReference type="Pfam" id="PF18317">
    <property type="entry name" value="SDH_C"/>
    <property type="match status" value="1"/>
</dbReference>
<dbReference type="Pfam" id="PF01488">
    <property type="entry name" value="Shikimate_DH"/>
    <property type="match status" value="1"/>
</dbReference>
<dbReference type="Pfam" id="PF08501">
    <property type="entry name" value="Shikimate_dh_N"/>
    <property type="match status" value="1"/>
</dbReference>
<dbReference type="Pfam" id="PF01202">
    <property type="entry name" value="SKI"/>
    <property type="match status" value="1"/>
</dbReference>
<dbReference type="PIRSF" id="PIRSF000514">
    <property type="entry name" value="Pentafunct_AroM"/>
    <property type="match status" value="1"/>
</dbReference>
<dbReference type="PRINTS" id="PR01100">
    <property type="entry name" value="SHIKIMTKNASE"/>
</dbReference>
<dbReference type="SUPFAM" id="SSF51569">
    <property type="entry name" value="Aldolase"/>
    <property type="match status" value="1"/>
</dbReference>
<dbReference type="SUPFAM" id="SSF53223">
    <property type="entry name" value="Aminoacid dehydrogenase-like, N-terminal domain"/>
    <property type="match status" value="1"/>
</dbReference>
<dbReference type="SUPFAM" id="SSF56796">
    <property type="entry name" value="Dehydroquinate synthase-like"/>
    <property type="match status" value="1"/>
</dbReference>
<dbReference type="SUPFAM" id="SSF55205">
    <property type="entry name" value="EPT/RTPC-like"/>
    <property type="match status" value="1"/>
</dbReference>
<dbReference type="SUPFAM" id="SSF51735">
    <property type="entry name" value="NAD(P)-binding Rossmann-fold domains"/>
    <property type="match status" value="1"/>
</dbReference>
<dbReference type="SUPFAM" id="SSF52540">
    <property type="entry name" value="P-loop containing nucleoside triphosphate hydrolases"/>
    <property type="match status" value="1"/>
</dbReference>
<dbReference type="PROSITE" id="PS01028">
    <property type="entry name" value="DEHYDROQUINASE_I"/>
    <property type="match status" value="1"/>
</dbReference>
<dbReference type="PROSITE" id="PS00104">
    <property type="entry name" value="EPSP_SYNTHASE_1"/>
    <property type="match status" value="1"/>
</dbReference>
<dbReference type="PROSITE" id="PS00885">
    <property type="entry name" value="EPSP_SYNTHASE_2"/>
    <property type="match status" value="1"/>
</dbReference>
<dbReference type="PROSITE" id="PS01128">
    <property type="entry name" value="SHIKIMATE_KINASE"/>
    <property type="match status" value="1"/>
</dbReference>
<gene>
    <name evidence="1" type="primary">ARO1</name>
    <name type="ordered locus">YALI0F12639g</name>
</gene>
<protein>
    <recommendedName>
        <fullName evidence="1">Pentafunctional AROM polypeptide</fullName>
    </recommendedName>
    <domain>
        <recommendedName>
            <fullName evidence="1">3-dehydroquinate synthase</fullName>
            <shortName evidence="1">DHQS</shortName>
            <ecNumber evidence="1">4.2.3.4</ecNumber>
        </recommendedName>
    </domain>
    <domain>
        <recommendedName>
            <fullName evidence="1">3-phosphoshikimate 1-carboxyvinyltransferase</fullName>
            <ecNumber evidence="1">2.5.1.19</ecNumber>
        </recommendedName>
        <alternativeName>
            <fullName evidence="1">5-enolpyruvylshikimate-3-phosphate synthase</fullName>
            <shortName evidence="1">EPSP synthase</shortName>
            <shortName evidence="1">EPSPS</shortName>
        </alternativeName>
    </domain>
    <domain>
        <recommendedName>
            <fullName evidence="1">Shikimate kinase</fullName>
            <shortName evidence="1">SK</shortName>
            <ecNumber evidence="1">2.7.1.71</ecNumber>
        </recommendedName>
    </domain>
    <domain>
        <recommendedName>
            <fullName evidence="1">3-dehydroquinate dehydratase</fullName>
            <shortName evidence="1">3-dehydroquinase</shortName>
            <ecNumber evidence="1">4.2.1.10</ecNumber>
        </recommendedName>
    </domain>
    <domain>
        <recommendedName>
            <fullName evidence="1">Shikimate dehydrogenase</fullName>
            <ecNumber evidence="1">1.1.1.25</ecNumber>
        </recommendedName>
    </domain>
</protein>
<accession>Q6C1X5</accession>
<sequence length="1556" mass="167465">MFAEGQIQKVPILGKESIHIGYKMQDHIVSEIVANIKSSTYILVTDTNIEDLGYVESLKTKFEAAFAKDGIKSRLLTYTVAPGETSKSRATKAAIEDWMLSKGCTRDTVILAVGGGVIGDMIGYVAATFMRGVRFVQIPTTLLAMVDSSIGGKTAIDTPLGKNLVGAFWQPVNIFIDTSFLETLPVREFINGMAEVIKTAAFYDAEEFTRLESASEIFLSTIKKRDAKDPRRVDLSPITDTIGRIVLGSARIKAAVVSADEREGGLRNLLNFGHSIGHAYEAILTPYILHGECVAIGMVKEAELSRYLGILSPVAVARLAKCIKAYELPVSLDDATVKARSHGKKCPVDDLLRIMGVDKKNDGSTKKIVILSAIGKTHEQKASSVADKDIRFVLSEEVIVGEAPVGDKKSYTVTPPGSKSISNRAFVLTALGKGPCKLRNLLHSDDTQHMLEAIELLGGASFEWEADGETLLVTGNGGKLTAPAQELYLGNAGTASRFLTTAATLVQKGDKDHVILTGNKRMQERPIGPLVDALRSNGADIAFQNAEGSLPLKIEAGVGLKGGLIEVAATVSSQYVSSLLMCAPYAQTPVTLSLVGGKPISQFYIDMTIAMMADFGVVVTKDETKEHTYHIPQGVYTNPEEYVVESDASSATYPLAYAAMTGHTVTVPNIGSKSLQGDARFAIDVLKAMGCTVEQTATSTTVTGVPNLKAIAVDMEPMTDAFLTACVVAAVSEGTTVITGIANQRVKECNRIEAMRVQLAKYGVVCRELEDGIEVDGISRSDLKTPVSVHSYDDHRVAMSFSLLSSIMAAPVAIEERRCVEKTWPGWWDVLSGVFNVPLEGVTLAKTVSKAESGLSKPSIFIVGMRGAGKTHLGAQAANHLGYEFIDLDQLLEKDLDTTIPQLIADKGWDHFRAEELRLLKQCLNDKSEGYVISCGGGVVETPAARDALQTFKGVGGIVLHVHRPVSRILEYLNKDQSRPAFVDDLEAVWQRRKELYRSVSSNVFFAPHCDSAEATAKVQQMLGAFLDRVTGKSEFVIPHKDQFTSFLSLTFPDVSIAATMLPSLSEGCSALELRVDLLNENDEAIPSEEYVLSQLAILRQNVDLPILYTVRTKAQGGRFPDDKPVELANLVNLGLKTAVELLDVELTYPAELVSSVGASRGYTKLLGSHHDFPGALNWSSLEWENMYARAEAVPVDVVKLVGMAKSFSDNFALENFREAHTSSPLLAINMGSHGQLSRVTNTLLTPVTHADLPVAAAPGQLSVEEINQTRSTIGMFNKNLSFFIVGTPIGHSKSPILHNTMFKKLGLPYEYSRFKTDDAAAVNAKARALLAQGNLGGISVTIPLKQDIIPFLDEVSPLAQQIGAVNTIIPGPNGTLKGDNTDILGLVNALTRFGANSLDKKTALIVGAGGTSLAAVHGLRSLGFAKILIANRTLSKAEAIADKFDNVEAVTLDSFVANKYTPSVIVSCVPATTFSMLDESNKLVSAALAASPKGLVLEAAYSAEATPLLKQVMDVEGWEFISGLYMLTEQGFEQFRLWTGIPAPKEVGEKAVLGN</sequence>
<name>ARO1_YARLI</name>
<evidence type="ECO:0000255" key="1">
    <source>
        <dbReference type="HAMAP-Rule" id="MF_03143"/>
    </source>
</evidence>
<keyword id="KW-0028">Amino-acid biosynthesis</keyword>
<keyword id="KW-0057">Aromatic amino acid biosynthesis</keyword>
<keyword id="KW-0067">ATP-binding</keyword>
<keyword id="KW-0963">Cytoplasm</keyword>
<keyword id="KW-0418">Kinase</keyword>
<keyword id="KW-0456">Lyase</keyword>
<keyword id="KW-0479">Metal-binding</keyword>
<keyword id="KW-0511">Multifunctional enzyme</keyword>
<keyword id="KW-0521">NADP</keyword>
<keyword id="KW-0547">Nucleotide-binding</keyword>
<keyword id="KW-0560">Oxidoreductase</keyword>
<keyword id="KW-1185">Reference proteome</keyword>
<keyword id="KW-0808">Transferase</keyword>
<keyword id="KW-0862">Zinc</keyword>
<organism>
    <name type="scientific">Yarrowia lipolytica (strain CLIB 122 / E 150)</name>
    <name type="common">Yeast</name>
    <name type="synonym">Candida lipolytica</name>
    <dbReference type="NCBI Taxonomy" id="284591"/>
    <lineage>
        <taxon>Eukaryota</taxon>
        <taxon>Fungi</taxon>
        <taxon>Dikarya</taxon>
        <taxon>Ascomycota</taxon>
        <taxon>Saccharomycotina</taxon>
        <taxon>Dipodascomycetes</taxon>
        <taxon>Dipodascales</taxon>
        <taxon>Dipodascales incertae sedis</taxon>
        <taxon>Yarrowia</taxon>
    </lineage>
</organism>